<protein>
    <recommendedName>
        <fullName evidence="1">Alanine racemase</fullName>
        <ecNumber evidence="1">5.1.1.1</ecNumber>
    </recommendedName>
</protein>
<sequence>MYNNKTMGSNKTIIINLNNLEHNLNLIKNKIGEKEIVATLKGDAYGHGLINIFKFLKSKNINYFGLSNIEDAKTLKKIDKNIKILMYIKVDKKEIKNLIKFELVPFVSDFEYLFLIEKECALQKNKIKVHLKIDIGMNRYGIKIDDALEIATYIQNSKFLELEGICSHLPSIENFKTTQKQIEQFLFFLETLKQKNIHPKFVHISNSGHIINYKLNPQFNMVRPGLILYGYCQSLKNKKPALNFKPVLSLFSKVIFIKNVKKGEKISYSGIFQAKEDMKIGIIPIGYFDGIPQNISNDFYFLINNKKCKIRGKVCMNLTIVEIPKDLKVKTGSKVEIVSEKLSIDEMSKFSKRSHYELLCNIGKYEKRKYLD</sequence>
<proteinExistence type="inferred from homology"/>
<dbReference type="EC" id="5.1.1.1" evidence="1"/>
<dbReference type="EMBL" id="AE000783">
    <property type="protein sequence ID" value="AAC66549.1"/>
    <property type="molecule type" value="Genomic_DNA"/>
</dbReference>
<dbReference type="PIR" id="H70119">
    <property type="entry name" value="H70119"/>
</dbReference>
<dbReference type="RefSeq" id="NP_212294.1">
    <property type="nucleotide sequence ID" value="NC_001318.1"/>
</dbReference>
<dbReference type="RefSeq" id="WP_002658168.1">
    <property type="nucleotide sequence ID" value="NC_001318.1"/>
</dbReference>
<dbReference type="SMR" id="O51182"/>
<dbReference type="STRING" id="224326.BB_0160"/>
<dbReference type="PaxDb" id="224326-BB_0160"/>
<dbReference type="DNASU" id="1194995"/>
<dbReference type="EnsemblBacteria" id="AAC66549">
    <property type="protein sequence ID" value="AAC66549"/>
    <property type="gene ID" value="BB_0160"/>
</dbReference>
<dbReference type="GeneID" id="56568060"/>
<dbReference type="KEGG" id="bbu:BB_0160"/>
<dbReference type="PATRIC" id="fig|224326.49.peg.557"/>
<dbReference type="HOGENOM" id="CLU_028393_2_2_12"/>
<dbReference type="OrthoDB" id="9813814at2"/>
<dbReference type="UniPathway" id="UPA00042">
    <property type="reaction ID" value="UER00497"/>
</dbReference>
<dbReference type="Proteomes" id="UP000001807">
    <property type="component" value="Chromosome"/>
</dbReference>
<dbReference type="GO" id="GO:0005829">
    <property type="term" value="C:cytosol"/>
    <property type="evidence" value="ECO:0007669"/>
    <property type="project" value="TreeGrafter"/>
</dbReference>
<dbReference type="GO" id="GO:0008784">
    <property type="term" value="F:alanine racemase activity"/>
    <property type="evidence" value="ECO:0007669"/>
    <property type="project" value="UniProtKB-UniRule"/>
</dbReference>
<dbReference type="GO" id="GO:0030170">
    <property type="term" value="F:pyridoxal phosphate binding"/>
    <property type="evidence" value="ECO:0007669"/>
    <property type="project" value="UniProtKB-UniRule"/>
</dbReference>
<dbReference type="GO" id="GO:0030632">
    <property type="term" value="P:D-alanine biosynthetic process"/>
    <property type="evidence" value="ECO:0007669"/>
    <property type="project" value="UniProtKB-UniRule"/>
</dbReference>
<dbReference type="CDD" id="cd00430">
    <property type="entry name" value="PLPDE_III_AR"/>
    <property type="match status" value="1"/>
</dbReference>
<dbReference type="Gene3D" id="3.20.20.10">
    <property type="entry name" value="Alanine racemase"/>
    <property type="match status" value="1"/>
</dbReference>
<dbReference type="Gene3D" id="2.40.37.10">
    <property type="entry name" value="Lyase, Ornithine Decarboxylase, Chain A, domain 1"/>
    <property type="match status" value="1"/>
</dbReference>
<dbReference type="HAMAP" id="MF_01201">
    <property type="entry name" value="Ala_racemase"/>
    <property type="match status" value="1"/>
</dbReference>
<dbReference type="InterPro" id="IPR000821">
    <property type="entry name" value="Ala_racemase"/>
</dbReference>
<dbReference type="InterPro" id="IPR009006">
    <property type="entry name" value="Ala_racemase/Decarboxylase_C"/>
</dbReference>
<dbReference type="InterPro" id="IPR011079">
    <property type="entry name" value="Ala_racemase_C"/>
</dbReference>
<dbReference type="InterPro" id="IPR001608">
    <property type="entry name" value="Ala_racemase_N"/>
</dbReference>
<dbReference type="InterPro" id="IPR020622">
    <property type="entry name" value="Ala_racemase_pyridoxalP-BS"/>
</dbReference>
<dbReference type="InterPro" id="IPR029066">
    <property type="entry name" value="PLP-binding_barrel"/>
</dbReference>
<dbReference type="NCBIfam" id="TIGR00492">
    <property type="entry name" value="alr"/>
    <property type="match status" value="1"/>
</dbReference>
<dbReference type="PANTHER" id="PTHR30511">
    <property type="entry name" value="ALANINE RACEMASE"/>
    <property type="match status" value="1"/>
</dbReference>
<dbReference type="PANTHER" id="PTHR30511:SF0">
    <property type="entry name" value="ALANINE RACEMASE, CATABOLIC-RELATED"/>
    <property type="match status" value="1"/>
</dbReference>
<dbReference type="Pfam" id="PF00842">
    <property type="entry name" value="Ala_racemase_C"/>
    <property type="match status" value="1"/>
</dbReference>
<dbReference type="Pfam" id="PF01168">
    <property type="entry name" value="Ala_racemase_N"/>
    <property type="match status" value="1"/>
</dbReference>
<dbReference type="PRINTS" id="PR00992">
    <property type="entry name" value="ALARACEMASE"/>
</dbReference>
<dbReference type="SMART" id="SM01005">
    <property type="entry name" value="Ala_racemase_C"/>
    <property type="match status" value="1"/>
</dbReference>
<dbReference type="SUPFAM" id="SSF50621">
    <property type="entry name" value="Alanine racemase C-terminal domain-like"/>
    <property type="match status" value="1"/>
</dbReference>
<dbReference type="SUPFAM" id="SSF51419">
    <property type="entry name" value="PLP-binding barrel"/>
    <property type="match status" value="1"/>
</dbReference>
<dbReference type="PROSITE" id="PS00395">
    <property type="entry name" value="ALANINE_RACEMASE"/>
    <property type="match status" value="1"/>
</dbReference>
<keyword id="KW-0413">Isomerase</keyword>
<keyword id="KW-0663">Pyridoxal phosphate</keyword>
<keyword id="KW-1185">Reference proteome</keyword>
<organism>
    <name type="scientific">Borreliella burgdorferi (strain ATCC 35210 / DSM 4680 / CIP 102532 / B31)</name>
    <name type="common">Borrelia burgdorferi</name>
    <dbReference type="NCBI Taxonomy" id="224326"/>
    <lineage>
        <taxon>Bacteria</taxon>
        <taxon>Pseudomonadati</taxon>
        <taxon>Spirochaetota</taxon>
        <taxon>Spirochaetia</taxon>
        <taxon>Spirochaetales</taxon>
        <taxon>Borreliaceae</taxon>
        <taxon>Borreliella</taxon>
    </lineage>
</organism>
<feature type="chain" id="PRO_0000114502" description="Alanine racemase">
    <location>
        <begin position="1"/>
        <end position="372"/>
    </location>
</feature>
<feature type="active site" description="Proton acceptor; specific for D-alanine" evidence="1">
    <location>
        <position position="41"/>
    </location>
</feature>
<feature type="active site" description="Proton acceptor; specific for L-alanine" evidence="1">
    <location>
        <position position="268"/>
    </location>
</feature>
<feature type="binding site" evidence="1">
    <location>
        <position position="139"/>
    </location>
    <ligand>
        <name>substrate</name>
    </ligand>
</feature>
<feature type="binding site" evidence="1">
    <location>
        <position position="316"/>
    </location>
    <ligand>
        <name>substrate</name>
    </ligand>
</feature>
<feature type="modified residue" description="N6-(pyridoxal phosphate)lysine" evidence="1">
    <location>
        <position position="41"/>
    </location>
</feature>
<comment type="function">
    <text evidence="1">Catalyzes the interconversion of L-alanine and D-alanine. May also act on other amino acids.</text>
</comment>
<comment type="catalytic activity">
    <reaction evidence="1">
        <text>L-alanine = D-alanine</text>
        <dbReference type="Rhea" id="RHEA:20249"/>
        <dbReference type="ChEBI" id="CHEBI:57416"/>
        <dbReference type="ChEBI" id="CHEBI:57972"/>
        <dbReference type="EC" id="5.1.1.1"/>
    </reaction>
</comment>
<comment type="cofactor">
    <cofactor evidence="1">
        <name>pyridoxal 5'-phosphate</name>
        <dbReference type="ChEBI" id="CHEBI:597326"/>
    </cofactor>
</comment>
<comment type="pathway">
    <text evidence="1">Amino-acid biosynthesis; D-alanine biosynthesis; D-alanine from L-alanine: step 1/1.</text>
</comment>
<comment type="similarity">
    <text evidence="1">Belongs to the alanine racemase family.</text>
</comment>
<gene>
    <name type="primary">alr</name>
    <name type="ordered locus">BB_0160</name>
</gene>
<name>ALR_BORBU</name>
<reference key="1">
    <citation type="journal article" date="1997" name="Nature">
        <title>Genomic sequence of a Lyme disease spirochaete, Borrelia burgdorferi.</title>
        <authorList>
            <person name="Fraser C.M."/>
            <person name="Casjens S."/>
            <person name="Huang W.M."/>
            <person name="Sutton G.G."/>
            <person name="Clayton R.A."/>
            <person name="Lathigra R."/>
            <person name="White O."/>
            <person name="Ketchum K.A."/>
            <person name="Dodson R.J."/>
            <person name="Hickey E.K."/>
            <person name="Gwinn M.L."/>
            <person name="Dougherty B.A."/>
            <person name="Tomb J.-F."/>
            <person name="Fleischmann R.D."/>
            <person name="Richardson D.L."/>
            <person name="Peterson J.D."/>
            <person name="Kerlavage A.R."/>
            <person name="Quackenbush J."/>
            <person name="Salzberg S.L."/>
            <person name="Hanson M."/>
            <person name="van Vugt R."/>
            <person name="Palmer N."/>
            <person name="Adams M.D."/>
            <person name="Gocayne J.D."/>
            <person name="Weidman J.F."/>
            <person name="Utterback T.R."/>
            <person name="Watthey L."/>
            <person name="McDonald L.A."/>
            <person name="Artiach P."/>
            <person name="Bowman C."/>
            <person name="Garland S.A."/>
            <person name="Fujii C."/>
            <person name="Cotton M.D."/>
            <person name="Horst K."/>
            <person name="Roberts K.M."/>
            <person name="Hatch B."/>
            <person name="Smith H.O."/>
            <person name="Venter J.C."/>
        </authorList>
    </citation>
    <scope>NUCLEOTIDE SEQUENCE [LARGE SCALE GENOMIC DNA]</scope>
    <source>
        <strain>ATCC 35210 / DSM 4680 / CIP 102532 / B31</strain>
    </source>
</reference>
<accession>O51182</accession>
<evidence type="ECO:0000255" key="1">
    <source>
        <dbReference type="HAMAP-Rule" id="MF_01201"/>
    </source>
</evidence>